<dbReference type="EC" id="2.7.1.71" evidence="1"/>
<dbReference type="EMBL" id="AE008692">
    <property type="protein sequence ID" value="AAV89218.1"/>
    <property type="molecule type" value="Genomic_DNA"/>
</dbReference>
<dbReference type="RefSeq" id="WP_011240497.1">
    <property type="nucleotide sequence ID" value="NZ_CP035711.1"/>
</dbReference>
<dbReference type="SMR" id="Q5NPY7"/>
<dbReference type="STRING" id="264203.ZMO0594"/>
<dbReference type="KEGG" id="zmo:ZMO0594"/>
<dbReference type="eggNOG" id="COG0703">
    <property type="taxonomic scope" value="Bacteria"/>
</dbReference>
<dbReference type="HOGENOM" id="CLU_057607_2_0_5"/>
<dbReference type="UniPathway" id="UPA00053">
    <property type="reaction ID" value="UER00088"/>
</dbReference>
<dbReference type="Proteomes" id="UP000001173">
    <property type="component" value="Chromosome"/>
</dbReference>
<dbReference type="GO" id="GO:0005829">
    <property type="term" value="C:cytosol"/>
    <property type="evidence" value="ECO:0007669"/>
    <property type="project" value="TreeGrafter"/>
</dbReference>
<dbReference type="GO" id="GO:0005524">
    <property type="term" value="F:ATP binding"/>
    <property type="evidence" value="ECO:0007669"/>
    <property type="project" value="UniProtKB-UniRule"/>
</dbReference>
<dbReference type="GO" id="GO:0000287">
    <property type="term" value="F:magnesium ion binding"/>
    <property type="evidence" value="ECO:0007669"/>
    <property type="project" value="UniProtKB-UniRule"/>
</dbReference>
<dbReference type="GO" id="GO:0004765">
    <property type="term" value="F:shikimate kinase activity"/>
    <property type="evidence" value="ECO:0007669"/>
    <property type="project" value="UniProtKB-UniRule"/>
</dbReference>
<dbReference type="GO" id="GO:0008652">
    <property type="term" value="P:amino acid biosynthetic process"/>
    <property type="evidence" value="ECO:0007669"/>
    <property type="project" value="UniProtKB-KW"/>
</dbReference>
<dbReference type="GO" id="GO:0009073">
    <property type="term" value="P:aromatic amino acid family biosynthetic process"/>
    <property type="evidence" value="ECO:0007669"/>
    <property type="project" value="UniProtKB-KW"/>
</dbReference>
<dbReference type="GO" id="GO:0009423">
    <property type="term" value="P:chorismate biosynthetic process"/>
    <property type="evidence" value="ECO:0007669"/>
    <property type="project" value="UniProtKB-UniRule"/>
</dbReference>
<dbReference type="CDD" id="cd00464">
    <property type="entry name" value="SK"/>
    <property type="match status" value="1"/>
</dbReference>
<dbReference type="Gene3D" id="3.40.50.300">
    <property type="entry name" value="P-loop containing nucleotide triphosphate hydrolases"/>
    <property type="match status" value="1"/>
</dbReference>
<dbReference type="HAMAP" id="MF_00109">
    <property type="entry name" value="Shikimate_kinase"/>
    <property type="match status" value="1"/>
</dbReference>
<dbReference type="InterPro" id="IPR027417">
    <property type="entry name" value="P-loop_NTPase"/>
</dbReference>
<dbReference type="InterPro" id="IPR031322">
    <property type="entry name" value="Shikimate/glucono_kinase"/>
</dbReference>
<dbReference type="InterPro" id="IPR000623">
    <property type="entry name" value="Shikimate_kinase/TSH1"/>
</dbReference>
<dbReference type="InterPro" id="IPR023000">
    <property type="entry name" value="Shikimate_kinase_CS"/>
</dbReference>
<dbReference type="NCBIfam" id="NF010552">
    <property type="entry name" value="PRK13946.1"/>
    <property type="match status" value="1"/>
</dbReference>
<dbReference type="PANTHER" id="PTHR21087">
    <property type="entry name" value="SHIKIMATE KINASE"/>
    <property type="match status" value="1"/>
</dbReference>
<dbReference type="PANTHER" id="PTHR21087:SF16">
    <property type="entry name" value="SHIKIMATE KINASE 1, CHLOROPLASTIC"/>
    <property type="match status" value="1"/>
</dbReference>
<dbReference type="Pfam" id="PF01202">
    <property type="entry name" value="SKI"/>
    <property type="match status" value="1"/>
</dbReference>
<dbReference type="PRINTS" id="PR01100">
    <property type="entry name" value="SHIKIMTKNASE"/>
</dbReference>
<dbReference type="SUPFAM" id="SSF52540">
    <property type="entry name" value="P-loop containing nucleoside triphosphate hydrolases"/>
    <property type="match status" value="1"/>
</dbReference>
<dbReference type="PROSITE" id="PS01128">
    <property type="entry name" value="SHIKIMATE_KINASE"/>
    <property type="match status" value="1"/>
</dbReference>
<evidence type="ECO:0000255" key="1">
    <source>
        <dbReference type="HAMAP-Rule" id="MF_00109"/>
    </source>
</evidence>
<organism>
    <name type="scientific">Zymomonas mobilis subsp. mobilis (strain ATCC 31821 / ZM4 / CP4)</name>
    <dbReference type="NCBI Taxonomy" id="264203"/>
    <lineage>
        <taxon>Bacteria</taxon>
        <taxon>Pseudomonadati</taxon>
        <taxon>Pseudomonadota</taxon>
        <taxon>Alphaproteobacteria</taxon>
        <taxon>Sphingomonadales</taxon>
        <taxon>Zymomonadaceae</taxon>
        <taxon>Zymomonas</taxon>
    </lineage>
</organism>
<gene>
    <name evidence="1" type="primary">aroK</name>
    <name type="ordered locus">ZMO0594</name>
</gene>
<reference key="1">
    <citation type="journal article" date="2005" name="Nat. Biotechnol.">
        <title>The genome sequence of the ethanologenic bacterium Zymomonas mobilis ZM4.</title>
        <authorList>
            <person name="Seo J.-S."/>
            <person name="Chong H."/>
            <person name="Park H.S."/>
            <person name="Yoon K.-O."/>
            <person name="Jung C."/>
            <person name="Kim J.J."/>
            <person name="Hong J.H."/>
            <person name="Kim H."/>
            <person name="Kim J.-H."/>
            <person name="Kil J.-I."/>
            <person name="Park C.J."/>
            <person name="Oh H.-M."/>
            <person name="Lee J.-S."/>
            <person name="Jin S.-J."/>
            <person name="Um H.-W."/>
            <person name="Lee H.-J."/>
            <person name="Oh S.-J."/>
            <person name="Kim J.Y."/>
            <person name="Kang H.L."/>
            <person name="Lee S.Y."/>
            <person name="Lee K.J."/>
            <person name="Kang H.S."/>
        </authorList>
    </citation>
    <scope>NUCLEOTIDE SEQUENCE [LARGE SCALE GENOMIC DNA]</scope>
    <source>
        <strain>ATCC 31821 / ZM4 / CP4</strain>
    </source>
</reference>
<feature type="chain" id="PRO_0000237965" description="Shikimate kinase">
    <location>
        <begin position="1"/>
        <end position="176"/>
    </location>
</feature>
<feature type="binding site" evidence="1">
    <location>
        <begin position="17"/>
        <end position="24"/>
    </location>
    <ligand>
        <name>ATP</name>
        <dbReference type="ChEBI" id="CHEBI:30616"/>
    </ligand>
</feature>
<keyword id="KW-0028">Amino-acid biosynthesis</keyword>
<keyword id="KW-0057">Aromatic amino acid biosynthesis</keyword>
<keyword id="KW-0067">ATP-binding</keyword>
<keyword id="KW-0963">Cytoplasm</keyword>
<keyword id="KW-0418">Kinase</keyword>
<keyword id="KW-0547">Nucleotide-binding</keyword>
<keyword id="KW-1185">Reference proteome</keyword>
<keyword id="KW-0808">Transferase</keyword>
<proteinExistence type="inferred from homology"/>
<sequence length="176" mass="19609">MLQSPSSPYPRTITLIGMMGVGKSTIGRRLASQLNMPFSDSDLEIEEAAGQSITEIFARYGENYFRNGERRVISRLIAGEPKVLAVGGGAFMDEETRKLVLEKTLAIWVKADIDTLAERVTKQADRPLLIGHDVRTRLQELADIRDSFYAMAPLHVWTGAQPHEEIVDAIIMALPR</sequence>
<protein>
    <recommendedName>
        <fullName evidence="1">Shikimate kinase</fullName>
        <shortName evidence="1">SK</shortName>
        <ecNumber evidence="1">2.7.1.71</ecNumber>
    </recommendedName>
</protein>
<name>AROK_ZYMMO</name>
<comment type="catalytic activity">
    <reaction evidence="1">
        <text>shikimate + ATP = 3-phosphoshikimate + ADP + H(+)</text>
        <dbReference type="Rhea" id="RHEA:13121"/>
        <dbReference type="ChEBI" id="CHEBI:15378"/>
        <dbReference type="ChEBI" id="CHEBI:30616"/>
        <dbReference type="ChEBI" id="CHEBI:36208"/>
        <dbReference type="ChEBI" id="CHEBI:145989"/>
        <dbReference type="ChEBI" id="CHEBI:456216"/>
        <dbReference type="EC" id="2.7.1.71"/>
    </reaction>
</comment>
<comment type="pathway">
    <text evidence="1">Metabolic intermediate biosynthesis; chorismate biosynthesis; chorismate from D-erythrose 4-phosphate and phosphoenolpyruvate: step 5/7.</text>
</comment>
<comment type="subcellular location">
    <subcellularLocation>
        <location evidence="1">Cytoplasm</location>
    </subcellularLocation>
</comment>
<comment type="similarity">
    <text evidence="1">Belongs to the shikimate kinase family.</text>
</comment>
<accession>Q5NPY7</accession>